<accession>Q7UNN9</accession>
<feature type="chain" id="PRO_0000268473" description="Bifunctional protein FolD">
    <location>
        <begin position="1"/>
        <end position="300"/>
    </location>
</feature>
<feature type="binding site" evidence="1">
    <location>
        <begin position="172"/>
        <end position="174"/>
    </location>
    <ligand>
        <name>NADP(+)</name>
        <dbReference type="ChEBI" id="CHEBI:58349"/>
    </ligand>
</feature>
<feature type="binding site" evidence="1">
    <location>
        <position position="206"/>
    </location>
    <ligand>
        <name>NADP(+)</name>
        <dbReference type="ChEBI" id="CHEBI:58349"/>
    </ligand>
</feature>
<feature type="binding site" evidence="1">
    <location>
        <position position="247"/>
    </location>
    <ligand>
        <name>NADP(+)</name>
        <dbReference type="ChEBI" id="CHEBI:58349"/>
    </ligand>
</feature>
<protein>
    <recommendedName>
        <fullName evidence="1">Bifunctional protein FolD</fullName>
    </recommendedName>
    <domain>
        <recommendedName>
            <fullName evidence="1">Methylenetetrahydrofolate dehydrogenase</fullName>
            <ecNumber evidence="1">1.5.1.5</ecNumber>
        </recommendedName>
    </domain>
    <domain>
        <recommendedName>
            <fullName evidence="1">Methenyltetrahydrofolate cyclohydrolase</fullName>
            <ecNumber evidence="1">3.5.4.9</ecNumber>
        </recommendedName>
    </domain>
</protein>
<name>FOLD_RHOBA</name>
<dbReference type="EC" id="1.5.1.5" evidence="1"/>
<dbReference type="EC" id="3.5.4.9" evidence="1"/>
<dbReference type="EMBL" id="BX294146">
    <property type="protein sequence ID" value="CAD75379.1"/>
    <property type="status" value="ALT_INIT"/>
    <property type="molecule type" value="Genomic_DNA"/>
</dbReference>
<dbReference type="RefSeq" id="NP_867832.1">
    <property type="nucleotide sequence ID" value="NC_005027.1"/>
</dbReference>
<dbReference type="RefSeq" id="WP_164922068.1">
    <property type="nucleotide sequence ID" value="NC_005027.1"/>
</dbReference>
<dbReference type="SMR" id="Q7UNN9"/>
<dbReference type="FunCoup" id="Q7UNN9">
    <property type="interactions" value="477"/>
</dbReference>
<dbReference type="STRING" id="243090.RB7468"/>
<dbReference type="EnsemblBacteria" id="CAD75379">
    <property type="protein sequence ID" value="CAD75379"/>
    <property type="gene ID" value="RB7468"/>
</dbReference>
<dbReference type="KEGG" id="rba:RB7468"/>
<dbReference type="PATRIC" id="fig|243090.15.peg.3605"/>
<dbReference type="eggNOG" id="COG0190">
    <property type="taxonomic scope" value="Bacteria"/>
</dbReference>
<dbReference type="HOGENOM" id="CLU_034045_0_0_0"/>
<dbReference type="InParanoid" id="Q7UNN9"/>
<dbReference type="OrthoDB" id="9803580at2"/>
<dbReference type="UniPathway" id="UPA00193"/>
<dbReference type="Proteomes" id="UP000001025">
    <property type="component" value="Chromosome"/>
</dbReference>
<dbReference type="GO" id="GO:0005829">
    <property type="term" value="C:cytosol"/>
    <property type="evidence" value="ECO:0000318"/>
    <property type="project" value="GO_Central"/>
</dbReference>
<dbReference type="GO" id="GO:0004477">
    <property type="term" value="F:methenyltetrahydrofolate cyclohydrolase activity"/>
    <property type="evidence" value="ECO:0000318"/>
    <property type="project" value="GO_Central"/>
</dbReference>
<dbReference type="GO" id="GO:0004488">
    <property type="term" value="F:methylenetetrahydrofolate dehydrogenase (NADP+) activity"/>
    <property type="evidence" value="ECO:0000318"/>
    <property type="project" value="GO_Central"/>
</dbReference>
<dbReference type="GO" id="GO:0000105">
    <property type="term" value="P:L-histidine biosynthetic process"/>
    <property type="evidence" value="ECO:0007669"/>
    <property type="project" value="UniProtKB-KW"/>
</dbReference>
<dbReference type="GO" id="GO:0009086">
    <property type="term" value="P:methionine biosynthetic process"/>
    <property type="evidence" value="ECO:0007669"/>
    <property type="project" value="UniProtKB-KW"/>
</dbReference>
<dbReference type="GO" id="GO:0006164">
    <property type="term" value="P:purine nucleotide biosynthetic process"/>
    <property type="evidence" value="ECO:0007669"/>
    <property type="project" value="UniProtKB-KW"/>
</dbReference>
<dbReference type="GO" id="GO:0035999">
    <property type="term" value="P:tetrahydrofolate interconversion"/>
    <property type="evidence" value="ECO:0000318"/>
    <property type="project" value="GO_Central"/>
</dbReference>
<dbReference type="CDD" id="cd01080">
    <property type="entry name" value="NAD_bind_m-THF_DH_Cyclohyd"/>
    <property type="match status" value="1"/>
</dbReference>
<dbReference type="FunFam" id="3.40.50.720:FF:000006">
    <property type="entry name" value="Bifunctional protein FolD"/>
    <property type="match status" value="1"/>
</dbReference>
<dbReference type="FunFam" id="3.40.50.10860:FF:000005">
    <property type="entry name" value="C-1-tetrahydrofolate synthase, cytoplasmic, putative"/>
    <property type="match status" value="1"/>
</dbReference>
<dbReference type="Gene3D" id="3.40.50.10860">
    <property type="entry name" value="Leucine Dehydrogenase, chain A, domain 1"/>
    <property type="match status" value="1"/>
</dbReference>
<dbReference type="Gene3D" id="3.40.50.720">
    <property type="entry name" value="NAD(P)-binding Rossmann-like Domain"/>
    <property type="match status" value="1"/>
</dbReference>
<dbReference type="HAMAP" id="MF_01576">
    <property type="entry name" value="THF_DHG_CYH"/>
    <property type="match status" value="1"/>
</dbReference>
<dbReference type="InterPro" id="IPR046346">
    <property type="entry name" value="Aminoacid_DH-like_N_sf"/>
</dbReference>
<dbReference type="InterPro" id="IPR036291">
    <property type="entry name" value="NAD(P)-bd_dom_sf"/>
</dbReference>
<dbReference type="InterPro" id="IPR000672">
    <property type="entry name" value="THF_DH/CycHdrlase"/>
</dbReference>
<dbReference type="InterPro" id="IPR020630">
    <property type="entry name" value="THF_DH/CycHdrlase_cat_dom"/>
</dbReference>
<dbReference type="InterPro" id="IPR020867">
    <property type="entry name" value="THF_DH/CycHdrlase_CS"/>
</dbReference>
<dbReference type="InterPro" id="IPR020631">
    <property type="entry name" value="THF_DH/CycHdrlase_NAD-bd_dom"/>
</dbReference>
<dbReference type="NCBIfam" id="NF010783">
    <property type="entry name" value="PRK14186.1"/>
    <property type="match status" value="1"/>
</dbReference>
<dbReference type="PANTHER" id="PTHR48099:SF5">
    <property type="entry name" value="C-1-TETRAHYDROFOLATE SYNTHASE, CYTOPLASMIC"/>
    <property type="match status" value="1"/>
</dbReference>
<dbReference type="PANTHER" id="PTHR48099">
    <property type="entry name" value="C-1-TETRAHYDROFOLATE SYNTHASE, CYTOPLASMIC-RELATED"/>
    <property type="match status" value="1"/>
</dbReference>
<dbReference type="Pfam" id="PF00763">
    <property type="entry name" value="THF_DHG_CYH"/>
    <property type="match status" value="1"/>
</dbReference>
<dbReference type="Pfam" id="PF02882">
    <property type="entry name" value="THF_DHG_CYH_C"/>
    <property type="match status" value="1"/>
</dbReference>
<dbReference type="PRINTS" id="PR00085">
    <property type="entry name" value="THFDHDRGNASE"/>
</dbReference>
<dbReference type="SUPFAM" id="SSF53223">
    <property type="entry name" value="Aminoacid dehydrogenase-like, N-terminal domain"/>
    <property type="match status" value="1"/>
</dbReference>
<dbReference type="SUPFAM" id="SSF51735">
    <property type="entry name" value="NAD(P)-binding Rossmann-fold domains"/>
    <property type="match status" value="1"/>
</dbReference>
<dbReference type="PROSITE" id="PS00766">
    <property type="entry name" value="THF_DHG_CYH_1"/>
    <property type="match status" value="1"/>
</dbReference>
<evidence type="ECO:0000255" key="1">
    <source>
        <dbReference type="HAMAP-Rule" id="MF_01576"/>
    </source>
</evidence>
<evidence type="ECO:0000305" key="2"/>
<reference key="1">
    <citation type="journal article" date="2003" name="Proc. Natl. Acad. Sci. U.S.A.">
        <title>Complete genome sequence of the marine planctomycete Pirellula sp. strain 1.</title>
        <authorList>
            <person name="Gloeckner F.O."/>
            <person name="Kube M."/>
            <person name="Bauer M."/>
            <person name="Teeling H."/>
            <person name="Lombardot T."/>
            <person name="Ludwig W."/>
            <person name="Gade D."/>
            <person name="Beck A."/>
            <person name="Borzym K."/>
            <person name="Heitmann K."/>
            <person name="Rabus R."/>
            <person name="Schlesner H."/>
            <person name="Amann R."/>
            <person name="Reinhardt R."/>
        </authorList>
    </citation>
    <scope>NUCLEOTIDE SEQUENCE [LARGE SCALE GENOMIC DNA]</scope>
    <source>
        <strain>DSM 10527 / NCIMB 13988 / SH1</strain>
    </source>
</reference>
<gene>
    <name evidence="1" type="primary">folD</name>
    <name type="ordered locus">RB7468</name>
</gene>
<sequence>MPATRLDGKKIAAEIRSEVAADVETFVSGGNPPPQLAAVLVGEDPASQVYVRNKERACAKAGIASRLDRMPAATTQAELLAKVAELNADPAVSGILVQLPLPSKANGGTGIDERAVLDAIDPIKDVDAFSPVNVGLLMQGRPRFLPCTPHGIVQLLHRTGIETSGKHVVVVGRSDIVGKPMAMMLAQKDSTCGPAVANATVTIAHSRTSNLAEICRQADILIAAVGRPEMITAEMIQPGAVVIDVGINRVGDKLVGDVAFDEAEAVASAITPVPGGVGPLTIAMLLHNTLMAAKMQAASN</sequence>
<organism>
    <name type="scientific">Rhodopirellula baltica (strain DSM 10527 / NCIMB 13988 / SH1)</name>
    <dbReference type="NCBI Taxonomy" id="243090"/>
    <lineage>
        <taxon>Bacteria</taxon>
        <taxon>Pseudomonadati</taxon>
        <taxon>Planctomycetota</taxon>
        <taxon>Planctomycetia</taxon>
        <taxon>Pirellulales</taxon>
        <taxon>Pirellulaceae</taxon>
        <taxon>Rhodopirellula</taxon>
    </lineage>
</organism>
<keyword id="KW-0028">Amino-acid biosynthesis</keyword>
<keyword id="KW-0368">Histidine biosynthesis</keyword>
<keyword id="KW-0378">Hydrolase</keyword>
<keyword id="KW-0486">Methionine biosynthesis</keyword>
<keyword id="KW-0511">Multifunctional enzyme</keyword>
<keyword id="KW-0521">NADP</keyword>
<keyword id="KW-0554">One-carbon metabolism</keyword>
<keyword id="KW-0560">Oxidoreductase</keyword>
<keyword id="KW-0658">Purine biosynthesis</keyword>
<keyword id="KW-1185">Reference proteome</keyword>
<proteinExistence type="inferred from homology"/>
<comment type="function">
    <text evidence="1">Catalyzes the oxidation of 5,10-methylenetetrahydrofolate to 5,10-methenyltetrahydrofolate and then the hydrolysis of 5,10-methenyltetrahydrofolate to 10-formyltetrahydrofolate.</text>
</comment>
<comment type="catalytic activity">
    <reaction evidence="1">
        <text>(6R)-5,10-methylene-5,6,7,8-tetrahydrofolate + NADP(+) = (6R)-5,10-methenyltetrahydrofolate + NADPH</text>
        <dbReference type="Rhea" id="RHEA:22812"/>
        <dbReference type="ChEBI" id="CHEBI:15636"/>
        <dbReference type="ChEBI" id="CHEBI:57455"/>
        <dbReference type="ChEBI" id="CHEBI:57783"/>
        <dbReference type="ChEBI" id="CHEBI:58349"/>
        <dbReference type="EC" id="1.5.1.5"/>
    </reaction>
</comment>
<comment type="catalytic activity">
    <reaction evidence="1">
        <text>(6R)-5,10-methenyltetrahydrofolate + H2O = (6R)-10-formyltetrahydrofolate + H(+)</text>
        <dbReference type="Rhea" id="RHEA:23700"/>
        <dbReference type="ChEBI" id="CHEBI:15377"/>
        <dbReference type="ChEBI" id="CHEBI:15378"/>
        <dbReference type="ChEBI" id="CHEBI:57455"/>
        <dbReference type="ChEBI" id="CHEBI:195366"/>
        <dbReference type="EC" id="3.5.4.9"/>
    </reaction>
</comment>
<comment type="pathway">
    <text evidence="1">One-carbon metabolism; tetrahydrofolate interconversion.</text>
</comment>
<comment type="subunit">
    <text evidence="1">Homodimer.</text>
</comment>
<comment type="similarity">
    <text evidence="1">Belongs to the tetrahydrofolate dehydrogenase/cyclohydrolase family.</text>
</comment>
<comment type="sequence caution" evidence="2">
    <conflict type="erroneous initiation">
        <sequence resource="EMBL-CDS" id="CAD75379"/>
    </conflict>
</comment>